<feature type="chain" id="PRO_1000012888" description="Lysine--tRNA ligase">
    <location>
        <begin position="1"/>
        <end position="495"/>
    </location>
</feature>
<feature type="binding site" evidence="1">
    <location>
        <position position="406"/>
    </location>
    <ligand>
        <name>Mg(2+)</name>
        <dbReference type="ChEBI" id="CHEBI:18420"/>
        <label>1</label>
    </ligand>
</feature>
<feature type="binding site" evidence="1">
    <location>
        <position position="413"/>
    </location>
    <ligand>
        <name>Mg(2+)</name>
        <dbReference type="ChEBI" id="CHEBI:18420"/>
        <label>1</label>
    </ligand>
</feature>
<feature type="binding site" evidence="1">
    <location>
        <position position="413"/>
    </location>
    <ligand>
        <name>Mg(2+)</name>
        <dbReference type="ChEBI" id="CHEBI:18420"/>
        <label>2</label>
    </ligand>
</feature>
<name>SYK_LEUMM</name>
<reference key="1">
    <citation type="journal article" date="2006" name="Proc. Natl. Acad. Sci. U.S.A.">
        <title>Comparative genomics of the lactic acid bacteria.</title>
        <authorList>
            <person name="Makarova K.S."/>
            <person name="Slesarev A."/>
            <person name="Wolf Y.I."/>
            <person name="Sorokin A."/>
            <person name="Mirkin B."/>
            <person name="Koonin E.V."/>
            <person name="Pavlov A."/>
            <person name="Pavlova N."/>
            <person name="Karamychev V."/>
            <person name="Polouchine N."/>
            <person name="Shakhova V."/>
            <person name="Grigoriev I."/>
            <person name="Lou Y."/>
            <person name="Rohksar D."/>
            <person name="Lucas S."/>
            <person name="Huang K."/>
            <person name="Goodstein D.M."/>
            <person name="Hawkins T."/>
            <person name="Plengvidhya V."/>
            <person name="Welker D."/>
            <person name="Hughes J."/>
            <person name="Goh Y."/>
            <person name="Benson A."/>
            <person name="Baldwin K."/>
            <person name="Lee J.-H."/>
            <person name="Diaz-Muniz I."/>
            <person name="Dosti B."/>
            <person name="Smeianov V."/>
            <person name="Wechter W."/>
            <person name="Barabote R."/>
            <person name="Lorca G."/>
            <person name="Altermann E."/>
            <person name="Barrangou R."/>
            <person name="Ganesan B."/>
            <person name="Xie Y."/>
            <person name="Rawsthorne H."/>
            <person name="Tamir D."/>
            <person name="Parker C."/>
            <person name="Breidt F."/>
            <person name="Broadbent J.R."/>
            <person name="Hutkins R."/>
            <person name="O'Sullivan D."/>
            <person name="Steele J."/>
            <person name="Unlu G."/>
            <person name="Saier M.H. Jr."/>
            <person name="Klaenhammer T."/>
            <person name="Richardson P."/>
            <person name="Kozyavkin S."/>
            <person name="Weimer B.C."/>
            <person name="Mills D.A."/>
        </authorList>
    </citation>
    <scope>NUCLEOTIDE SEQUENCE [LARGE SCALE GENOMIC DNA]</scope>
    <source>
        <strain>ATCC 8293 / DSM 20343 / BCRC 11652 / CCM 1803 / JCM 6124 / NCDO 523 / NBRC 100496 / NCIMB 8023 / NCTC 12954 / NRRL B-1118 / 37Y</strain>
    </source>
</reference>
<protein>
    <recommendedName>
        <fullName evidence="1">Lysine--tRNA ligase</fullName>
        <ecNumber evidence="1">6.1.1.6</ecNumber>
    </recommendedName>
    <alternativeName>
        <fullName evidence="1">Lysyl-tRNA synthetase</fullName>
        <shortName evidence="1">LysRS</shortName>
    </alternativeName>
</protein>
<sequence length="495" mass="56373">MAEEKALNDQMLARRQKLATIVSDLHLDPFGKRFERTAKAQELHNLYDASSLEELENAKHEVVIAGRMVAKRGAGKVIFADFRDVSGKIQVYARRDDLADNYPIIKRADLGDFLGIKGIMMKTEAGELTVLATELTHLSKALRPMPDKFHGISDVETRYRKRYLDLIANEDSFKKFQERSHIISAIRAYMDRNDFLEVETPILQTEAGGAAARPFITHHNALNIDMYMRIATELYLKRLVVGGMERVYEIGRIFRNEGMDPKHNPEFTTMESYAAYMDFTDVMDETEGIFKAAASVVSDDLKITYQGTEIDLGTKFARKHLVDLIKEQTGIDFWQEMSVEEAQKLADDNHVKYEKYWGVGHIINAFFEEFVEDTLVQPTFVYGHPVEVSPLAKKNTDDPRFTDRFELFIMGSEYANAFTELNDPIDQRARFEAQAAERENGNDEAEGIDEDFIEALEYGMPPTGGLGVGIDRLVMLLTDSDTIRDVVLFPTMRPE</sequence>
<proteinExistence type="inferred from homology"/>
<gene>
    <name evidence="1" type="primary">lysS</name>
    <name type="ordered locus">LEUM_0406</name>
</gene>
<comment type="catalytic activity">
    <reaction evidence="1">
        <text>tRNA(Lys) + L-lysine + ATP = L-lysyl-tRNA(Lys) + AMP + diphosphate</text>
        <dbReference type="Rhea" id="RHEA:20792"/>
        <dbReference type="Rhea" id="RHEA-COMP:9696"/>
        <dbReference type="Rhea" id="RHEA-COMP:9697"/>
        <dbReference type="ChEBI" id="CHEBI:30616"/>
        <dbReference type="ChEBI" id="CHEBI:32551"/>
        <dbReference type="ChEBI" id="CHEBI:33019"/>
        <dbReference type="ChEBI" id="CHEBI:78442"/>
        <dbReference type="ChEBI" id="CHEBI:78529"/>
        <dbReference type="ChEBI" id="CHEBI:456215"/>
        <dbReference type="EC" id="6.1.1.6"/>
    </reaction>
</comment>
<comment type="cofactor">
    <cofactor evidence="1">
        <name>Mg(2+)</name>
        <dbReference type="ChEBI" id="CHEBI:18420"/>
    </cofactor>
    <text evidence="1">Binds 3 Mg(2+) ions per subunit.</text>
</comment>
<comment type="subunit">
    <text evidence="1">Homodimer.</text>
</comment>
<comment type="subcellular location">
    <subcellularLocation>
        <location evidence="1">Cytoplasm</location>
    </subcellularLocation>
</comment>
<comment type="similarity">
    <text evidence="1">Belongs to the class-II aminoacyl-tRNA synthetase family.</text>
</comment>
<accession>Q03Z44</accession>
<dbReference type="EC" id="6.1.1.6" evidence="1"/>
<dbReference type="EMBL" id="CP000414">
    <property type="protein sequence ID" value="ABJ61528.1"/>
    <property type="molecule type" value="Genomic_DNA"/>
</dbReference>
<dbReference type="RefSeq" id="WP_011679264.1">
    <property type="nucleotide sequence ID" value="NC_008531.1"/>
</dbReference>
<dbReference type="SMR" id="Q03Z44"/>
<dbReference type="EnsemblBacteria" id="ABJ61528">
    <property type="protein sequence ID" value="ABJ61528"/>
    <property type="gene ID" value="LEUM_0406"/>
</dbReference>
<dbReference type="GeneID" id="29576604"/>
<dbReference type="KEGG" id="lme:LEUM_0406"/>
<dbReference type="eggNOG" id="COG1190">
    <property type="taxonomic scope" value="Bacteria"/>
</dbReference>
<dbReference type="HOGENOM" id="CLU_008255_6_2_9"/>
<dbReference type="Proteomes" id="UP000000362">
    <property type="component" value="Chromosome"/>
</dbReference>
<dbReference type="GO" id="GO:0005829">
    <property type="term" value="C:cytosol"/>
    <property type="evidence" value="ECO:0007669"/>
    <property type="project" value="TreeGrafter"/>
</dbReference>
<dbReference type="GO" id="GO:0005524">
    <property type="term" value="F:ATP binding"/>
    <property type="evidence" value="ECO:0007669"/>
    <property type="project" value="UniProtKB-UniRule"/>
</dbReference>
<dbReference type="GO" id="GO:0140096">
    <property type="term" value="F:catalytic activity, acting on a protein"/>
    <property type="evidence" value="ECO:0007669"/>
    <property type="project" value="UniProtKB-ARBA"/>
</dbReference>
<dbReference type="GO" id="GO:0004824">
    <property type="term" value="F:lysine-tRNA ligase activity"/>
    <property type="evidence" value="ECO:0007669"/>
    <property type="project" value="UniProtKB-UniRule"/>
</dbReference>
<dbReference type="GO" id="GO:0000287">
    <property type="term" value="F:magnesium ion binding"/>
    <property type="evidence" value="ECO:0007669"/>
    <property type="project" value="UniProtKB-UniRule"/>
</dbReference>
<dbReference type="GO" id="GO:0016740">
    <property type="term" value="F:transferase activity"/>
    <property type="evidence" value="ECO:0007669"/>
    <property type="project" value="UniProtKB-ARBA"/>
</dbReference>
<dbReference type="GO" id="GO:0000049">
    <property type="term" value="F:tRNA binding"/>
    <property type="evidence" value="ECO:0007669"/>
    <property type="project" value="TreeGrafter"/>
</dbReference>
<dbReference type="GO" id="GO:0006430">
    <property type="term" value="P:lysyl-tRNA aminoacylation"/>
    <property type="evidence" value="ECO:0007669"/>
    <property type="project" value="UniProtKB-UniRule"/>
</dbReference>
<dbReference type="CDD" id="cd00775">
    <property type="entry name" value="LysRS_core"/>
    <property type="match status" value="1"/>
</dbReference>
<dbReference type="CDD" id="cd04322">
    <property type="entry name" value="LysRS_N"/>
    <property type="match status" value="1"/>
</dbReference>
<dbReference type="FunFam" id="2.40.50.140:FF:000024">
    <property type="entry name" value="Lysine--tRNA ligase"/>
    <property type="match status" value="1"/>
</dbReference>
<dbReference type="FunFam" id="3.30.930.10:FF:000001">
    <property type="entry name" value="Lysine--tRNA ligase"/>
    <property type="match status" value="1"/>
</dbReference>
<dbReference type="Gene3D" id="3.30.930.10">
    <property type="entry name" value="Bira Bifunctional Protein, Domain 2"/>
    <property type="match status" value="1"/>
</dbReference>
<dbReference type="Gene3D" id="2.40.50.140">
    <property type="entry name" value="Nucleic acid-binding proteins"/>
    <property type="match status" value="1"/>
</dbReference>
<dbReference type="HAMAP" id="MF_00252">
    <property type="entry name" value="Lys_tRNA_synth_class2"/>
    <property type="match status" value="1"/>
</dbReference>
<dbReference type="InterPro" id="IPR004364">
    <property type="entry name" value="Aa-tRNA-synt_II"/>
</dbReference>
<dbReference type="InterPro" id="IPR006195">
    <property type="entry name" value="aa-tRNA-synth_II"/>
</dbReference>
<dbReference type="InterPro" id="IPR045864">
    <property type="entry name" value="aa-tRNA-synth_II/BPL/LPL"/>
</dbReference>
<dbReference type="InterPro" id="IPR002313">
    <property type="entry name" value="Lys-tRNA-ligase_II"/>
</dbReference>
<dbReference type="InterPro" id="IPR044136">
    <property type="entry name" value="Lys-tRNA-ligase_II_N"/>
</dbReference>
<dbReference type="InterPro" id="IPR018149">
    <property type="entry name" value="Lys-tRNA-synth_II_C"/>
</dbReference>
<dbReference type="InterPro" id="IPR012340">
    <property type="entry name" value="NA-bd_OB-fold"/>
</dbReference>
<dbReference type="InterPro" id="IPR004365">
    <property type="entry name" value="NA-bd_OB_tRNA"/>
</dbReference>
<dbReference type="NCBIfam" id="TIGR00499">
    <property type="entry name" value="lysS_bact"/>
    <property type="match status" value="1"/>
</dbReference>
<dbReference type="NCBIfam" id="NF001756">
    <property type="entry name" value="PRK00484.1"/>
    <property type="match status" value="1"/>
</dbReference>
<dbReference type="PANTHER" id="PTHR42918:SF15">
    <property type="entry name" value="LYSINE--TRNA LIGASE, CHLOROPLASTIC_MITOCHONDRIAL"/>
    <property type="match status" value="1"/>
</dbReference>
<dbReference type="PANTHER" id="PTHR42918">
    <property type="entry name" value="LYSYL-TRNA SYNTHETASE"/>
    <property type="match status" value="1"/>
</dbReference>
<dbReference type="Pfam" id="PF00152">
    <property type="entry name" value="tRNA-synt_2"/>
    <property type="match status" value="1"/>
</dbReference>
<dbReference type="Pfam" id="PF01336">
    <property type="entry name" value="tRNA_anti-codon"/>
    <property type="match status" value="1"/>
</dbReference>
<dbReference type="PRINTS" id="PR00982">
    <property type="entry name" value="TRNASYNTHLYS"/>
</dbReference>
<dbReference type="SUPFAM" id="SSF55681">
    <property type="entry name" value="Class II aaRS and biotin synthetases"/>
    <property type="match status" value="1"/>
</dbReference>
<dbReference type="SUPFAM" id="SSF50249">
    <property type="entry name" value="Nucleic acid-binding proteins"/>
    <property type="match status" value="1"/>
</dbReference>
<dbReference type="PROSITE" id="PS50862">
    <property type="entry name" value="AA_TRNA_LIGASE_II"/>
    <property type="match status" value="1"/>
</dbReference>
<evidence type="ECO:0000255" key="1">
    <source>
        <dbReference type="HAMAP-Rule" id="MF_00252"/>
    </source>
</evidence>
<organism>
    <name type="scientific">Leuconostoc mesenteroides subsp. mesenteroides (strain ATCC 8293 / DSM 20343 / BCRC 11652 / CCM 1803 / JCM 6124 / NCDO 523 / NBRC 100496 / NCIMB 8023 / NCTC 12954 / NRRL B-1118 / 37Y)</name>
    <dbReference type="NCBI Taxonomy" id="203120"/>
    <lineage>
        <taxon>Bacteria</taxon>
        <taxon>Bacillati</taxon>
        <taxon>Bacillota</taxon>
        <taxon>Bacilli</taxon>
        <taxon>Lactobacillales</taxon>
        <taxon>Lactobacillaceae</taxon>
        <taxon>Leuconostoc</taxon>
    </lineage>
</organism>
<keyword id="KW-0030">Aminoacyl-tRNA synthetase</keyword>
<keyword id="KW-0067">ATP-binding</keyword>
<keyword id="KW-0963">Cytoplasm</keyword>
<keyword id="KW-0436">Ligase</keyword>
<keyword id="KW-0460">Magnesium</keyword>
<keyword id="KW-0479">Metal-binding</keyword>
<keyword id="KW-0547">Nucleotide-binding</keyword>
<keyword id="KW-0648">Protein biosynthesis</keyword>
<keyword id="KW-1185">Reference proteome</keyword>